<evidence type="ECO:0000255" key="1">
    <source>
        <dbReference type="HAMAP-Rule" id="MF_00040"/>
    </source>
</evidence>
<evidence type="ECO:0000256" key="2">
    <source>
        <dbReference type="SAM" id="MobiDB-lite"/>
    </source>
</evidence>
<sequence length="186" mass="20793">MSEGIDIKELKRRMDGAISVFKGDIASLRTGRASANILDPVTVEAYGSRMPLNQVANITVPEPRMLSVSVWDKSMVSAVERGIRESNLGLNPIIDGQNLRIPLPELNEERRKSLVKVAHDYAEKSKVAIRHVRRDGMDGLKKAEKDGVIGQDESRAQSERVQKMTDETISEIDRLLGEKEKEIMQV</sequence>
<keyword id="KW-0963">Cytoplasm</keyword>
<keyword id="KW-0648">Protein biosynthesis</keyword>
<accession>Q1MH51</accession>
<reference key="1">
    <citation type="journal article" date="2006" name="Genome Biol.">
        <title>The genome of Rhizobium leguminosarum has recognizable core and accessory components.</title>
        <authorList>
            <person name="Young J.P.W."/>
            <person name="Crossman L.C."/>
            <person name="Johnston A.W.B."/>
            <person name="Thomson N.R."/>
            <person name="Ghazoui Z.F."/>
            <person name="Hull K.H."/>
            <person name="Wexler M."/>
            <person name="Curson A.R.J."/>
            <person name="Todd J.D."/>
            <person name="Poole P.S."/>
            <person name="Mauchline T.H."/>
            <person name="East A.K."/>
            <person name="Quail M.A."/>
            <person name="Churcher C."/>
            <person name="Arrowsmith C."/>
            <person name="Cherevach I."/>
            <person name="Chillingworth T."/>
            <person name="Clarke K."/>
            <person name="Cronin A."/>
            <person name="Davis P."/>
            <person name="Fraser A."/>
            <person name="Hance Z."/>
            <person name="Hauser H."/>
            <person name="Jagels K."/>
            <person name="Moule S."/>
            <person name="Mungall K."/>
            <person name="Norbertczak H."/>
            <person name="Rabbinowitsch E."/>
            <person name="Sanders M."/>
            <person name="Simmonds M."/>
            <person name="Whitehead S."/>
            <person name="Parkhill J."/>
        </authorList>
    </citation>
    <scope>NUCLEOTIDE SEQUENCE [LARGE SCALE GENOMIC DNA]</scope>
    <source>
        <strain>DSM 114642 / LMG 32736 / 3841</strain>
    </source>
</reference>
<protein>
    <recommendedName>
        <fullName evidence="1">Ribosome-recycling factor</fullName>
        <shortName evidence="1">RRF</shortName>
    </recommendedName>
    <alternativeName>
        <fullName evidence="1">Ribosome-releasing factor</fullName>
    </alternativeName>
</protein>
<proteinExistence type="inferred from homology"/>
<comment type="function">
    <text evidence="1">Responsible for the release of ribosomes from messenger RNA at the termination of protein biosynthesis. May increase the efficiency of translation by recycling ribosomes from one round of translation to another.</text>
</comment>
<comment type="subcellular location">
    <subcellularLocation>
        <location evidence="1">Cytoplasm</location>
    </subcellularLocation>
</comment>
<comment type="similarity">
    <text evidence="1">Belongs to the RRF family.</text>
</comment>
<feature type="chain" id="PRO_1000003244" description="Ribosome-recycling factor">
    <location>
        <begin position="1"/>
        <end position="186"/>
    </location>
</feature>
<feature type="region of interest" description="Disordered" evidence="2">
    <location>
        <begin position="144"/>
        <end position="163"/>
    </location>
</feature>
<dbReference type="EMBL" id="AM236080">
    <property type="protein sequence ID" value="CAK07716.1"/>
    <property type="molecule type" value="Genomic_DNA"/>
</dbReference>
<dbReference type="RefSeq" id="WP_011651816.1">
    <property type="nucleotide sequence ID" value="NC_008380.1"/>
</dbReference>
<dbReference type="SMR" id="Q1MH51"/>
<dbReference type="EnsemblBacteria" id="CAK07716">
    <property type="protein sequence ID" value="CAK07716"/>
    <property type="gene ID" value="RL2224"/>
</dbReference>
<dbReference type="KEGG" id="rle:RL2224"/>
<dbReference type="eggNOG" id="COG0233">
    <property type="taxonomic scope" value="Bacteria"/>
</dbReference>
<dbReference type="HOGENOM" id="CLU_073981_2_0_5"/>
<dbReference type="Proteomes" id="UP000006575">
    <property type="component" value="Chromosome"/>
</dbReference>
<dbReference type="GO" id="GO:0005829">
    <property type="term" value="C:cytosol"/>
    <property type="evidence" value="ECO:0007669"/>
    <property type="project" value="GOC"/>
</dbReference>
<dbReference type="GO" id="GO:0043023">
    <property type="term" value="F:ribosomal large subunit binding"/>
    <property type="evidence" value="ECO:0007669"/>
    <property type="project" value="TreeGrafter"/>
</dbReference>
<dbReference type="GO" id="GO:0002184">
    <property type="term" value="P:cytoplasmic translational termination"/>
    <property type="evidence" value="ECO:0007669"/>
    <property type="project" value="TreeGrafter"/>
</dbReference>
<dbReference type="CDD" id="cd00520">
    <property type="entry name" value="RRF"/>
    <property type="match status" value="1"/>
</dbReference>
<dbReference type="FunFam" id="1.10.132.20:FF:000001">
    <property type="entry name" value="Ribosome-recycling factor"/>
    <property type="match status" value="1"/>
</dbReference>
<dbReference type="FunFam" id="3.30.1360.40:FF:000001">
    <property type="entry name" value="Ribosome-recycling factor"/>
    <property type="match status" value="1"/>
</dbReference>
<dbReference type="Gene3D" id="3.30.1360.40">
    <property type="match status" value="1"/>
</dbReference>
<dbReference type="Gene3D" id="1.10.132.20">
    <property type="entry name" value="Ribosome-recycling factor"/>
    <property type="match status" value="1"/>
</dbReference>
<dbReference type="HAMAP" id="MF_00040">
    <property type="entry name" value="RRF"/>
    <property type="match status" value="1"/>
</dbReference>
<dbReference type="InterPro" id="IPR002661">
    <property type="entry name" value="Ribosome_recyc_fac"/>
</dbReference>
<dbReference type="InterPro" id="IPR023584">
    <property type="entry name" value="Ribosome_recyc_fac_dom"/>
</dbReference>
<dbReference type="InterPro" id="IPR036191">
    <property type="entry name" value="RRF_sf"/>
</dbReference>
<dbReference type="NCBIfam" id="TIGR00496">
    <property type="entry name" value="frr"/>
    <property type="match status" value="1"/>
</dbReference>
<dbReference type="PANTHER" id="PTHR20982:SF3">
    <property type="entry name" value="MITOCHONDRIAL RIBOSOME RECYCLING FACTOR PSEUDO 1"/>
    <property type="match status" value="1"/>
</dbReference>
<dbReference type="PANTHER" id="PTHR20982">
    <property type="entry name" value="RIBOSOME RECYCLING FACTOR"/>
    <property type="match status" value="1"/>
</dbReference>
<dbReference type="Pfam" id="PF01765">
    <property type="entry name" value="RRF"/>
    <property type="match status" value="1"/>
</dbReference>
<dbReference type="SUPFAM" id="SSF55194">
    <property type="entry name" value="Ribosome recycling factor, RRF"/>
    <property type="match status" value="1"/>
</dbReference>
<organism>
    <name type="scientific">Rhizobium johnstonii (strain DSM 114642 / LMG 32736 / 3841)</name>
    <name type="common">Rhizobium leguminosarum bv. viciae</name>
    <dbReference type="NCBI Taxonomy" id="216596"/>
    <lineage>
        <taxon>Bacteria</taxon>
        <taxon>Pseudomonadati</taxon>
        <taxon>Pseudomonadota</taxon>
        <taxon>Alphaproteobacteria</taxon>
        <taxon>Hyphomicrobiales</taxon>
        <taxon>Rhizobiaceae</taxon>
        <taxon>Rhizobium/Agrobacterium group</taxon>
        <taxon>Rhizobium</taxon>
        <taxon>Rhizobium johnstonii</taxon>
    </lineage>
</organism>
<gene>
    <name evidence="1" type="primary">frr</name>
    <name type="ordered locus">RL2224</name>
</gene>
<name>RRF_RHIJ3</name>